<protein>
    <recommendedName>
        <fullName evidence="1">Esterase FrsA</fullName>
        <ecNumber evidence="1">3.1.1.1</ecNumber>
    </recommendedName>
</protein>
<comment type="function">
    <text evidence="1">Catalyzes the hydrolysis of esters.</text>
</comment>
<comment type="catalytic activity">
    <reaction evidence="1">
        <text>a carboxylic ester + H2O = an alcohol + a carboxylate + H(+)</text>
        <dbReference type="Rhea" id="RHEA:21164"/>
        <dbReference type="ChEBI" id="CHEBI:15377"/>
        <dbReference type="ChEBI" id="CHEBI:15378"/>
        <dbReference type="ChEBI" id="CHEBI:29067"/>
        <dbReference type="ChEBI" id="CHEBI:30879"/>
        <dbReference type="ChEBI" id="CHEBI:33308"/>
        <dbReference type="EC" id="3.1.1.1"/>
    </reaction>
</comment>
<comment type="similarity">
    <text evidence="1">Belongs to the FrsA family.</text>
</comment>
<evidence type="ECO:0000255" key="1">
    <source>
        <dbReference type="HAMAP-Rule" id="MF_01063"/>
    </source>
</evidence>
<accession>B4TZ86</accession>
<reference key="1">
    <citation type="journal article" date="2011" name="J. Bacteriol.">
        <title>Comparative genomics of 28 Salmonella enterica isolates: evidence for CRISPR-mediated adaptive sublineage evolution.</title>
        <authorList>
            <person name="Fricke W.F."/>
            <person name="Mammel M.K."/>
            <person name="McDermott P.F."/>
            <person name="Tartera C."/>
            <person name="White D.G."/>
            <person name="Leclerc J.E."/>
            <person name="Ravel J."/>
            <person name="Cebula T.A."/>
        </authorList>
    </citation>
    <scope>NUCLEOTIDE SEQUENCE [LARGE SCALE GENOMIC DNA]</scope>
    <source>
        <strain>CVM19633</strain>
    </source>
</reference>
<keyword id="KW-0378">Hydrolase</keyword>
<keyword id="KW-0719">Serine esterase</keyword>
<feature type="chain" id="PRO_1000136527" description="Esterase FrsA">
    <location>
        <begin position="1"/>
        <end position="414"/>
    </location>
</feature>
<sequence>MTQANLSETLFKPRFKHTETSTLVRRFNRGSQPPMQSALDGKNVPHWYRMINRLMWIWRGVDPREILDVQARIVMSDAERTDDDLYDTVIGYRGGNWIYEWAKQAMDWQQKACQEQDAMRSGRYWLHASTLYNIAAYPHLKGDELAEQAQALANRAYEEAAQRLPGSLREMEFAVPGGSPVTAFLHMPKGDGPFPTVLMCGGLDAMQTDYYTLYERYFAPRGIAMLTLDMPSVGFSSKWKLTQDSSLLHQHVLKALPNVPWVDHTRVAAFGFRFGANVAVRLAYLEAPRLKAVACLGPVVHALLSDPQRQSTVPEMYLDVLASRLGMHDASDEALRVELNRYSLKVQGLLGRRCPTPMLSGFWKNDPFSPEEESRLITTSSSDGKLIEIPFNPVYRNFDHALQEITDWINHRLC</sequence>
<organism>
    <name type="scientific">Salmonella schwarzengrund (strain CVM19633)</name>
    <dbReference type="NCBI Taxonomy" id="439843"/>
    <lineage>
        <taxon>Bacteria</taxon>
        <taxon>Pseudomonadati</taxon>
        <taxon>Pseudomonadota</taxon>
        <taxon>Gammaproteobacteria</taxon>
        <taxon>Enterobacterales</taxon>
        <taxon>Enterobacteriaceae</taxon>
        <taxon>Salmonella</taxon>
    </lineage>
</organism>
<gene>
    <name evidence="1" type="primary">frsA</name>
    <name type="ordered locus">SeSA_A0367</name>
</gene>
<dbReference type="EC" id="3.1.1.1" evidence="1"/>
<dbReference type="EMBL" id="CP001127">
    <property type="protein sequence ID" value="ACF90084.1"/>
    <property type="molecule type" value="Genomic_DNA"/>
</dbReference>
<dbReference type="RefSeq" id="WP_000189586.1">
    <property type="nucleotide sequence ID" value="NC_011094.1"/>
</dbReference>
<dbReference type="SMR" id="B4TZ86"/>
<dbReference type="ESTHER" id="salty-yafa">
    <property type="family name" value="Duf_1100-R"/>
</dbReference>
<dbReference type="KEGG" id="sew:SeSA_A0367"/>
<dbReference type="HOGENOM" id="CLU_036819_0_0_6"/>
<dbReference type="Proteomes" id="UP000001865">
    <property type="component" value="Chromosome"/>
</dbReference>
<dbReference type="GO" id="GO:0106435">
    <property type="term" value="F:carboxylesterase activity"/>
    <property type="evidence" value="ECO:0007669"/>
    <property type="project" value="UniProtKB-EC"/>
</dbReference>
<dbReference type="FunFam" id="3.40.50.1820:FF:000022">
    <property type="entry name" value="Esterase FrsA"/>
    <property type="match status" value="1"/>
</dbReference>
<dbReference type="Gene3D" id="3.40.50.1820">
    <property type="entry name" value="alpha/beta hydrolase"/>
    <property type="match status" value="1"/>
</dbReference>
<dbReference type="HAMAP" id="MF_01063">
    <property type="entry name" value="FrsA"/>
    <property type="match status" value="1"/>
</dbReference>
<dbReference type="InterPro" id="IPR029058">
    <property type="entry name" value="AB_hydrolase_fold"/>
</dbReference>
<dbReference type="InterPro" id="IPR043423">
    <property type="entry name" value="FrsA"/>
</dbReference>
<dbReference type="InterPro" id="IPR010520">
    <property type="entry name" value="FrsA-like"/>
</dbReference>
<dbReference type="InterPro" id="IPR050261">
    <property type="entry name" value="FrsA_esterase"/>
</dbReference>
<dbReference type="NCBIfam" id="NF003460">
    <property type="entry name" value="PRK05077.1"/>
    <property type="match status" value="1"/>
</dbReference>
<dbReference type="PANTHER" id="PTHR22946">
    <property type="entry name" value="DIENELACTONE HYDROLASE DOMAIN-CONTAINING PROTEIN-RELATED"/>
    <property type="match status" value="1"/>
</dbReference>
<dbReference type="PANTHER" id="PTHR22946:SF4">
    <property type="entry name" value="ESTERASE FRSA"/>
    <property type="match status" value="1"/>
</dbReference>
<dbReference type="Pfam" id="PF06500">
    <property type="entry name" value="FrsA-like"/>
    <property type="match status" value="1"/>
</dbReference>
<dbReference type="SUPFAM" id="SSF53474">
    <property type="entry name" value="alpha/beta-Hydrolases"/>
    <property type="match status" value="1"/>
</dbReference>
<proteinExistence type="inferred from homology"/>
<name>FRSA_SALSV</name>